<evidence type="ECO:0000250" key="1"/>
<evidence type="ECO:0000255" key="2">
    <source>
        <dbReference type="HAMAP-Rule" id="MF_00610"/>
    </source>
</evidence>
<feature type="signal peptide" evidence="2">
    <location>
        <begin position="1"/>
        <end position="35"/>
    </location>
</feature>
<feature type="chain" id="PRO_0000342048" description="Cytochrome f">
    <location>
        <begin position="36"/>
        <end position="320"/>
    </location>
</feature>
<feature type="transmembrane region" description="Helical" evidence="2">
    <location>
        <begin position="286"/>
        <end position="306"/>
    </location>
</feature>
<feature type="binding site" description="axial binding residue" evidence="2">
    <location>
        <position position="36"/>
    </location>
    <ligand>
        <name>heme</name>
        <dbReference type="ChEBI" id="CHEBI:30413"/>
    </ligand>
    <ligandPart>
        <name>Fe</name>
        <dbReference type="ChEBI" id="CHEBI:18248"/>
    </ligandPart>
</feature>
<feature type="binding site" description="covalent" evidence="2">
    <location>
        <position position="56"/>
    </location>
    <ligand>
        <name>heme</name>
        <dbReference type="ChEBI" id="CHEBI:30413"/>
    </ligand>
</feature>
<feature type="binding site" description="covalent" evidence="2">
    <location>
        <position position="59"/>
    </location>
    <ligand>
        <name>heme</name>
        <dbReference type="ChEBI" id="CHEBI:30413"/>
    </ligand>
</feature>
<feature type="binding site" description="axial binding residue" evidence="2">
    <location>
        <position position="60"/>
    </location>
    <ligand>
        <name>heme</name>
        <dbReference type="ChEBI" id="CHEBI:30413"/>
    </ligand>
    <ligandPart>
        <name>Fe</name>
        <dbReference type="ChEBI" id="CHEBI:18248"/>
    </ligandPart>
</feature>
<comment type="function">
    <text evidence="2">Component of the cytochrome b6-f complex, which mediates electron transfer between photosystem II (PSII) and photosystem I (PSI), cyclic electron flow around PSI, and state transitions.</text>
</comment>
<comment type="cofactor">
    <cofactor evidence="2">
        <name>heme</name>
        <dbReference type="ChEBI" id="CHEBI:30413"/>
    </cofactor>
    <text evidence="2">Binds 1 heme group covalently.</text>
</comment>
<comment type="subunit">
    <text evidence="1">The 4 large subunits of the cytochrome b6-f complex are cytochrome b6, subunit IV (17 kDa polypeptide, petD), cytochrome f and the Rieske protein, while the 4 small subunits are PetG, PetL, PetM and PetN. The complex functions as a dimer (By similarity).</text>
</comment>
<comment type="subcellular location">
    <subcellularLocation>
        <location evidence="2">Plastid</location>
        <location evidence="2">Chloroplast thylakoid membrane</location>
        <topology evidence="2">Single-pass membrane protein</topology>
    </subcellularLocation>
</comment>
<comment type="similarity">
    <text evidence="2">Belongs to the cytochrome f family.</text>
</comment>
<accession>A4QKB8</accession>
<sequence>MQTRNTFSWIREEITRSISVSLMIYIITWASISSAYPIFAQQNYENPREATGRIVCANCHLANKPVDIEVPQTVLPDTVFEAVVKIPYDMQLKQVLANGKKGALNVGAVLILPEGFELAPPDRISPEMKEKIGNLSFQNYRPNKKNILVIGPVPGQKYSEITFPILAPDPASNKDVHFLKYPIYVGGNRGRGQIYPDGSKSNNTVYNATAGGIISKILRKEKGGYEITIVDASNGRQVIDIIPRGLELLVSEGESIKLDQPLTSNPNVGGFGQGDAEIVLQDPLRVQGLLFFLGSVVLAQIFLVLKKKQFEKVQLSEMNF</sequence>
<gene>
    <name evidence="2" type="primary">petA</name>
</gene>
<keyword id="KW-0150">Chloroplast</keyword>
<keyword id="KW-0249">Electron transport</keyword>
<keyword id="KW-0349">Heme</keyword>
<keyword id="KW-0408">Iron</keyword>
<keyword id="KW-0472">Membrane</keyword>
<keyword id="KW-0479">Metal-binding</keyword>
<keyword id="KW-0602">Photosynthesis</keyword>
<keyword id="KW-0934">Plastid</keyword>
<keyword id="KW-0732">Signal</keyword>
<keyword id="KW-0793">Thylakoid</keyword>
<keyword id="KW-0812">Transmembrane</keyword>
<keyword id="KW-1133">Transmembrane helix</keyword>
<keyword id="KW-0813">Transport</keyword>
<proteinExistence type="inferred from homology"/>
<protein>
    <recommendedName>
        <fullName evidence="2">Cytochrome f</fullName>
    </recommendedName>
</protein>
<organism>
    <name type="scientific">Barbarea verna</name>
    <name type="common">Land cress</name>
    <name type="synonym">Erysimum vernum</name>
    <dbReference type="NCBI Taxonomy" id="50458"/>
    <lineage>
        <taxon>Eukaryota</taxon>
        <taxon>Viridiplantae</taxon>
        <taxon>Streptophyta</taxon>
        <taxon>Embryophyta</taxon>
        <taxon>Tracheophyta</taxon>
        <taxon>Spermatophyta</taxon>
        <taxon>Magnoliopsida</taxon>
        <taxon>eudicotyledons</taxon>
        <taxon>Gunneridae</taxon>
        <taxon>Pentapetalae</taxon>
        <taxon>rosids</taxon>
        <taxon>malvids</taxon>
        <taxon>Brassicales</taxon>
        <taxon>Brassicaceae</taxon>
        <taxon>Cardamineae</taxon>
        <taxon>Barbarea</taxon>
    </lineage>
</organism>
<dbReference type="EMBL" id="AP009370">
    <property type="protein sequence ID" value="BAF50123.1"/>
    <property type="molecule type" value="Genomic_DNA"/>
</dbReference>
<dbReference type="RefSeq" id="YP_001123299.1">
    <property type="nucleotide sequence ID" value="NC_009269.1"/>
</dbReference>
<dbReference type="BMRB" id="A4QKB8"/>
<dbReference type="SMR" id="A4QKB8"/>
<dbReference type="GeneID" id="4961847"/>
<dbReference type="GO" id="GO:0009535">
    <property type="term" value="C:chloroplast thylakoid membrane"/>
    <property type="evidence" value="ECO:0007669"/>
    <property type="project" value="UniProtKB-SubCell"/>
</dbReference>
<dbReference type="GO" id="GO:0009055">
    <property type="term" value="F:electron transfer activity"/>
    <property type="evidence" value="ECO:0007669"/>
    <property type="project" value="UniProtKB-UniRule"/>
</dbReference>
<dbReference type="GO" id="GO:0020037">
    <property type="term" value="F:heme binding"/>
    <property type="evidence" value="ECO:0007669"/>
    <property type="project" value="InterPro"/>
</dbReference>
<dbReference type="GO" id="GO:0005506">
    <property type="term" value="F:iron ion binding"/>
    <property type="evidence" value="ECO:0007669"/>
    <property type="project" value="InterPro"/>
</dbReference>
<dbReference type="GO" id="GO:0015979">
    <property type="term" value="P:photosynthesis"/>
    <property type="evidence" value="ECO:0007669"/>
    <property type="project" value="UniProtKB-UniRule"/>
</dbReference>
<dbReference type="FunFam" id="1.20.5.700:FF:000001">
    <property type="entry name" value="Cytochrome f"/>
    <property type="match status" value="1"/>
</dbReference>
<dbReference type="FunFam" id="2.40.50.100:FF:000007">
    <property type="entry name" value="Cytochrome f"/>
    <property type="match status" value="1"/>
</dbReference>
<dbReference type="FunFam" id="2.60.40.830:FF:000001">
    <property type="entry name" value="Cytochrome f"/>
    <property type="match status" value="1"/>
</dbReference>
<dbReference type="Gene3D" id="2.40.50.100">
    <property type="match status" value="1"/>
</dbReference>
<dbReference type="Gene3D" id="2.60.40.830">
    <property type="entry name" value="Cytochrome f large domain"/>
    <property type="match status" value="1"/>
</dbReference>
<dbReference type="Gene3D" id="1.20.5.700">
    <property type="entry name" value="Single helix bin"/>
    <property type="match status" value="1"/>
</dbReference>
<dbReference type="HAMAP" id="MF_00610">
    <property type="entry name" value="Cytb6_f_cytF"/>
    <property type="match status" value="1"/>
</dbReference>
<dbReference type="InterPro" id="IPR024058">
    <property type="entry name" value="Cyt-f_TM"/>
</dbReference>
<dbReference type="InterPro" id="IPR002325">
    <property type="entry name" value="Cyt_f"/>
</dbReference>
<dbReference type="InterPro" id="IPR024094">
    <property type="entry name" value="Cyt_f_lg_dom"/>
</dbReference>
<dbReference type="InterPro" id="IPR036826">
    <property type="entry name" value="Cyt_f_lg_dom_sf"/>
</dbReference>
<dbReference type="InterPro" id="IPR011054">
    <property type="entry name" value="Rudment_hybrid_motif"/>
</dbReference>
<dbReference type="PANTHER" id="PTHR33288">
    <property type="match status" value="1"/>
</dbReference>
<dbReference type="PANTHER" id="PTHR33288:SF10">
    <property type="entry name" value="CYTOCHROME F"/>
    <property type="match status" value="1"/>
</dbReference>
<dbReference type="Pfam" id="PF01333">
    <property type="entry name" value="Apocytochr_F_C"/>
    <property type="match status" value="1"/>
</dbReference>
<dbReference type="Pfam" id="PF16639">
    <property type="entry name" value="Apocytochr_F_N"/>
    <property type="match status" value="1"/>
</dbReference>
<dbReference type="PRINTS" id="PR00610">
    <property type="entry name" value="CYTOCHROMEF"/>
</dbReference>
<dbReference type="SUPFAM" id="SSF103431">
    <property type="entry name" value="Cytochrome f subunit of the cytochrome b6f complex, transmembrane anchor"/>
    <property type="match status" value="1"/>
</dbReference>
<dbReference type="SUPFAM" id="SSF49441">
    <property type="entry name" value="Cytochrome f, large domain"/>
    <property type="match status" value="1"/>
</dbReference>
<dbReference type="SUPFAM" id="SSF51246">
    <property type="entry name" value="Rudiment single hybrid motif"/>
    <property type="match status" value="1"/>
</dbReference>
<dbReference type="PROSITE" id="PS51010">
    <property type="entry name" value="CYTF"/>
    <property type="match status" value="1"/>
</dbReference>
<geneLocation type="chloroplast"/>
<name>CYF_BARVE</name>
<reference key="1">
    <citation type="submission" date="2007-03" db="EMBL/GenBank/DDBJ databases">
        <title>Sequencing analysis of Barbarea verna chloroplast DNA.</title>
        <authorList>
            <person name="Hosouchi T."/>
            <person name="Tsuruoka H."/>
            <person name="Kotani H."/>
        </authorList>
    </citation>
    <scope>NUCLEOTIDE SEQUENCE [LARGE SCALE GENOMIC DNA]</scope>
</reference>